<reference key="1">
    <citation type="journal article" date="1989" name="Mol. Gen. Genet.">
        <title>The linear mitochondrial plasmid pClK1 of the phytopathogenic fungus Claviceps purpurea may code for a DNA polymerase and an RNA polymerase.</title>
        <authorList>
            <person name="Oeser B."/>
            <person name="Tudzynski P."/>
        </authorList>
    </citation>
    <scope>NUCLEOTIDE SEQUENCE [GENOMIC DNA]</scope>
    <source>
        <strain>K</strain>
    </source>
</reference>
<dbReference type="EMBL" id="X15648">
    <property type="status" value="NOT_ANNOTATED_CDS"/>
    <property type="molecule type" value="Genomic_DNA"/>
</dbReference>
<dbReference type="PIR" id="JQ0305">
    <property type="entry name" value="JQ0305"/>
</dbReference>
<dbReference type="GO" id="GO:0005739">
    <property type="term" value="C:mitochondrion"/>
    <property type="evidence" value="ECO:0007669"/>
    <property type="project" value="UniProtKB-SubCell"/>
</dbReference>
<feature type="chain" id="PRO_0000196891" description="Uncharacterized 11.8 kDa protein">
    <location>
        <begin position="1"/>
        <end position="104"/>
    </location>
</feature>
<keyword id="KW-0496">Mitochondrion</keyword>
<keyword id="KW-0614">Plasmid</keyword>
<accession>P22370</accession>
<comment type="subcellular location">
    <subcellularLocation>
        <location evidence="1">Mitochondrion</location>
    </subcellularLocation>
</comment>
<protein>
    <recommendedName>
        <fullName>Uncharacterized 11.8 kDa protein</fullName>
    </recommendedName>
    <alternativeName>
        <fullName>ORF5</fullName>
    </alternativeName>
</protein>
<name>YPC5_CLAPU</name>
<sequence length="104" mass="11794">NLSSLLKSPMPIPRRARRAFLSSLRFLCWAKVRRAGFSGKFNPTPVPVLFSNKLVRQGLETLYCSKRINIVKIQSDLKSGNLVLSKELLIVQQKLVSKQNQVNN</sequence>
<geneLocation type="mitochondrion"/>
<geneLocation type="plasmid">
    <name>pClK1</name>
</geneLocation>
<proteinExistence type="predicted"/>
<organism>
    <name type="scientific">Claviceps purpurea</name>
    <name type="common">Ergot fungus</name>
    <name type="synonym">Sphacelia segetum</name>
    <dbReference type="NCBI Taxonomy" id="5111"/>
    <lineage>
        <taxon>Eukaryota</taxon>
        <taxon>Fungi</taxon>
        <taxon>Dikarya</taxon>
        <taxon>Ascomycota</taxon>
        <taxon>Pezizomycotina</taxon>
        <taxon>Sordariomycetes</taxon>
        <taxon>Hypocreomycetidae</taxon>
        <taxon>Hypocreales</taxon>
        <taxon>Clavicipitaceae</taxon>
        <taxon>Claviceps</taxon>
    </lineage>
</organism>
<evidence type="ECO:0000305" key="1"/>